<feature type="chain" id="PRO_1000024152" description="Dihydroorotate dehydrogenase (quinone)">
    <location>
        <begin position="1"/>
        <end position="338"/>
    </location>
</feature>
<feature type="active site" description="Nucleophile" evidence="1">
    <location>
        <position position="172"/>
    </location>
</feature>
<feature type="binding site" evidence="1">
    <location>
        <begin position="59"/>
        <end position="63"/>
    </location>
    <ligand>
        <name>FMN</name>
        <dbReference type="ChEBI" id="CHEBI:58210"/>
    </ligand>
</feature>
<feature type="binding site" evidence="1">
    <location>
        <position position="63"/>
    </location>
    <ligand>
        <name>substrate</name>
    </ligand>
</feature>
<feature type="binding site" evidence="1">
    <location>
        <position position="83"/>
    </location>
    <ligand>
        <name>FMN</name>
        <dbReference type="ChEBI" id="CHEBI:58210"/>
    </ligand>
</feature>
<feature type="binding site" evidence="1">
    <location>
        <begin position="108"/>
        <end position="112"/>
    </location>
    <ligand>
        <name>substrate</name>
    </ligand>
</feature>
<feature type="binding site" evidence="1">
    <location>
        <position position="136"/>
    </location>
    <ligand>
        <name>FMN</name>
        <dbReference type="ChEBI" id="CHEBI:58210"/>
    </ligand>
</feature>
<feature type="binding site" evidence="1">
    <location>
        <position position="169"/>
    </location>
    <ligand>
        <name>FMN</name>
        <dbReference type="ChEBI" id="CHEBI:58210"/>
    </ligand>
</feature>
<feature type="binding site" evidence="1">
    <location>
        <position position="169"/>
    </location>
    <ligand>
        <name>substrate</name>
    </ligand>
</feature>
<feature type="binding site" evidence="1">
    <location>
        <position position="174"/>
    </location>
    <ligand>
        <name>substrate</name>
    </ligand>
</feature>
<feature type="binding site" evidence="1">
    <location>
        <position position="214"/>
    </location>
    <ligand>
        <name>FMN</name>
        <dbReference type="ChEBI" id="CHEBI:58210"/>
    </ligand>
</feature>
<feature type="binding site" evidence="1">
    <location>
        <position position="242"/>
    </location>
    <ligand>
        <name>FMN</name>
        <dbReference type="ChEBI" id="CHEBI:58210"/>
    </ligand>
</feature>
<feature type="binding site" evidence="1">
    <location>
        <begin position="243"/>
        <end position="244"/>
    </location>
    <ligand>
        <name>substrate</name>
    </ligand>
</feature>
<feature type="binding site" evidence="1">
    <location>
        <position position="265"/>
    </location>
    <ligand>
        <name>FMN</name>
        <dbReference type="ChEBI" id="CHEBI:58210"/>
    </ligand>
</feature>
<feature type="binding site" evidence="1">
    <location>
        <position position="294"/>
    </location>
    <ligand>
        <name>FMN</name>
        <dbReference type="ChEBI" id="CHEBI:58210"/>
    </ligand>
</feature>
<feature type="binding site" evidence="1">
    <location>
        <begin position="315"/>
        <end position="316"/>
    </location>
    <ligand>
        <name>FMN</name>
        <dbReference type="ChEBI" id="CHEBI:58210"/>
    </ligand>
</feature>
<dbReference type="EC" id="1.3.5.2" evidence="1"/>
<dbReference type="EMBL" id="AM406670">
    <property type="protein sequence ID" value="CAL94827.1"/>
    <property type="molecule type" value="Genomic_DNA"/>
</dbReference>
<dbReference type="RefSeq" id="WP_011765941.1">
    <property type="nucleotide sequence ID" value="NC_008702.1"/>
</dbReference>
<dbReference type="SMR" id="A1K7M2"/>
<dbReference type="STRING" id="62928.azo2210"/>
<dbReference type="KEGG" id="azo:azo2210"/>
<dbReference type="eggNOG" id="COG0167">
    <property type="taxonomic scope" value="Bacteria"/>
</dbReference>
<dbReference type="HOGENOM" id="CLU_013640_2_0_4"/>
<dbReference type="UniPathway" id="UPA00070">
    <property type="reaction ID" value="UER00946"/>
</dbReference>
<dbReference type="Proteomes" id="UP000002588">
    <property type="component" value="Chromosome"/>
</dbReference>
<dbReference type="GO" id="GO:0005737">
    <property type="term" value="C:cytoplasm"/>
    <property type="evidence" value="ECO:0007669"/>
    <property type="project" value="InterPro"/>
</dbReference>
<dbReference type="GO" id="GO:0005886">
    <property type="term" value="C:plasma membrane"/>
    <property type="evidence" value="ECO:0007669"/>
    <property type="project" value="UniProtKB-SubCell"/>
</dbReference>
<dbReference type="GO" id="GO:0106430">
    <property type="term" value="F:dihydroorotate dehydrogenase (quinone) activity"/>
    <property type="evidence" value="ECO:0007669"/>
    <property type="project" value="UniProtKB-EC"/>
</dbReference>
<dbReference type="GO" id="GO:0006207">
    <property type="term" value="P:'de novo' pyrimidine nucleobase biosynthetic process"/>
    <property type="evidence" value="ECO:0007669"/>
    <property type="project" value="InterPro"/>
</dbReference>
<dbReference type="GO" id="GO:0044205">
    <property type="term" value="P:'de novo' UMP biosynthetic process"/>
    <property type="evidence" value="ECO:0007669"/>
    <property type="project" value="UniProtKB-UniRule"/>
</dbReference>
<dbReference type="CDD" id="cd04738">
    <property type="entry name" value="DHOD_2_like"/>
    <property type="match status" value="1"/>
</dbReference>
<dbReference type="FunFam" id="3.20.20.70:FF:000028">
    <property type="entry name" value="Dihydroorotate dehydrogenase (quinone)"/>
    <property type="match status" value="1"/>
</dbReference>
<dbReference type="Gene3D" id="3.20.20.70">
    <property type="entry name" value="Aldolase class I"/>
    <property type="match status" value="1"/>
</dbReference>
<dbReference type="HAMAP" id="MF_00225">
    <property type="entry name" value="DHO_dh_type2"/>
    <property type="match status" value="1"/>
</dbReference>
<dbReference type="InterPro" id="IPR013785">
    <property type="entry name" value="Aldolase_TIM"/>
</dbReference>
<dbReference type="InterPro" id="IPR050074">
    <property type="entry name" value="DHO_dehydrogenase"/>
</dbReference>
<dbReference type="InterPro" id="IPR012135">
    <property type="entry name" value="Dihydroorotate_DH_1_2"/>
</dbReference>
<dbReference type="InterPro" id="IPR005719">
    <property type="entry name" value="Dihydroorotate_DH_2"/>
</dbReference>
<dbReference type="InterPro" id="IPR005720">
    <property type="entry name" value="Dihydroorotate_DH_cat"/>
</dbReference>
<dbReference type="InterPro" id="IPR001295">
    <property type="entry name" value="Dihydroorotate_DH_CS"/>
</dbReference>
<dbReference type="NCBIfam" id="NF003644">
    <property type="entry name" value="PRK05286.1-1"/>
    <property type="match status" value="1"/>
</dbReference>
<dbReference type="NCBIfam" id="NF003645">
    <property type="entry name" value="PRK05286.1-2"/>
    <property type="match status" value="1"/>
</dbReference>
<dbReference type="NCBIfam" id="NF003646">
    <property type="entry name" value="PRK05286.1-4"/>
    <property type="match status" value="1"/>
</dbReference>
<dbReference type="NCBIfam" id="NF003652">
    <property type="entry name" value="PRK05286.2-5"/>
    <property type="match status" value="1"/>
</dbReference>
<dbReference type="NCBIfam" id="TIGR01036">
    <property type="entry name" value="pyrD_sub2"/>
    <property type="match status" value="1"/>
</dbReference>
<dbReference type="PANTHER" id="PTHR48109:SF4">
    <property type="entry name" value="DIHYDROOROTATE DEHYDROGENASE (QUINONE), MITOCHONDRIAL"/>
    <property type="match status" value="1"/>
</dbReference>
<dbReference type="PANTHER" id="PTHR48109">
    <property type="entry name" value="DIHYDROOROTATE DEHYDROGENASE (QUINONE), MITOCHONDRIAL-RELATED"/>
    <property type="match status" value="1"/>
</dbReference>
<dbReference type="Pfam" id="PF01180">
    <property type="entry name" value="DHO_dh"/>
    <property type="match status" value="1"/>
</dbReference>
<dbReference type="PIRSF" id="PIRSF000164">
    <property type="entry name" value="DHO_oxidase"/>
    <property type="match status" value="1"/>
</dbReference>
<dbReference type="SUPFAM" id="SSF51395">
    <property type="entry name" value="FMN-linked oxidoreductases"/>
    <property type="match status" value="1"/>
</dbReference>
<dbReference type="PROSITE" id="PS00911">
    <property type="entry name" value="DHODEHASE_1"/>
    <property type="match status" value="1"/>
</dbReference>
<dbReference type="PROSITE" id="PS00912">
    <property type="entry name" value="DHODEHASE_2"/>
    <property type="match status" value="1"/>
</dbReference>
<name>PYRD_AZOSB</name>
<comment type="function">
    <text evidence="1">Catalyzes the conversion of dihydroorotate to orotate with quinone as electron acceptor.</text>
</comment>
<comment type="catalytic activity">
    <reaction evidence="1">
        <text>(S)-dihydroorotate + a quinone = orotate + a quinol</text>
        <dbReference type="Rhea" id="RHEA:30187"/>
        <dbReference type="ChEBI" id="CHEBI:24646"/>
        <dbReference type="ChEBI" id="CHEBI:30839"/>
        <dbReference type="ChEBI" id="CHEBI:30864"/>
        <dbReference type="ChEBI" id="CHEBI:132124"/>
        <dbReference type="EC" id="1.3.5.2"/>
    </reaction>
</comment>
<comment type="cofactor">
    <cofactor evidence="1">
        <name>FMN</name>
        <dbReference type="ChEBI" id="CHEBI:58210"/>
    </cofactor>
    <text evidence="1">Binds 1 FMN per subunit.</text>
</comment>
<comment type="pathway">
    <text evidence="1">Pyrimidine metabolism; UMP biosynthesis via de novo pathway; orotate from (S)-dihydroorotate (quinone route): step 1/1.</text>
</comment>
<comment type="subunit">
    <text evidence="1">Monomer.</text>
</comment>
<comment type="subcellular location">
    <subcellularLocation>
        <location evidence="1">Cell membrane</location>
        <topology evidence="1">Peripheral membrane protein</topology>
    </subcellularLocation>
</comment>
<comment type="similarity">
    <text evidence="1">Belongs to the dihydroorotate dehydrogenase family. Type 2 subfamily.</text>
</comment>
<proteinExistence type="inferred from homology"/>
<keyword id="KW-1003">Cell membrane</keyword>
<keyword id="KW-0285">Flavoprotein</keyword>
<keyword id="KW-0288">FMN</keyword>
<keyword id="KW-0472">Membrane</keyword>
<keyword id="KW-0560">Oxidoreductase</keyword>
<keyword id="KW-0665">Pyrimidine biosynthesis</keyword>
<keyword id="KW-1185">Reference proteome</keyword>
<evidence type="ECO:0000255" key="1">
    <source>
        <dbReference type="HAMAP-Rule" id="MF_00225"/>
    </source>
</evidence>
<organism>
    <name type="scientific">Azoarcus sp. (strain BH72)</name>
    <dbReference type="NCBI Taxonomy" id="418699"/>
    <lineage>
        <taxon>Bacteria</taxon>
        <taxon>Pseudomonadati</taxon>
        <taxon>Pseudomonadota</taxon>
        <taxon>Betaproteobacteria</taxon>
        <taxon>Rhodocyclales</taxon>
        <taxon>Zoogloeaceae</taxon>
        <taxon>Azoarcus</taxon>
    </lineage>
</organism>
<gene>
    <name evidence="1" type="primary">pyrD</name>
    <name type="ordered locus">azo2210</name>
</gene>
<protein>
    <recommendedName>
        <fullName evidence="1">Dihydroorotate dehydrogenase (quinone)</fullName>
        <ecNumber evidence="1">1.3.5.2</ecNumber>
    </recommendedName>
    <alternativeName>
        <fullName evidence="1">DHOdehase</fullName>
        <shortName evidence="1">DHOD</shortName>
        <shortName evidence="1">DHODase</shortName>
    </alternativeName>
    <alternativeName>
        <fullName evidence="1">Dihydroorotate oxidase</fullName>
    </alternativeName>
</protein>
<accession>A1K7M2</accession>
<reference key="1">
    <citation type="journal article" date="2006" name="Nat. Biotechnol.">
        <title>Complete genome of the mutualistic, N2-fixing grass endophyte Azoarcus sp. strain BH72.</title>
        <authorList>
            <person name="Krause A."/>
            <person name="Ramakumar A."/>
            <person name="Bartels D."/>
            <person name="Battistoni F."/>
            <person name="Bekel T."/>
            <person name="Boch J."/>
            <person name="Boehm M."/>
            <person name="Friedrich F."/>
            <person name="Hurek T."/>
            <person name="Krause L."/>
            <person name="Linke B."/>
            <person name="McHardy A.C."/>
            <person name="Sarkar A."/>
            <person name="Schneiker S."/>
            <person name="Syed A.A."/>
            <person name="Thauer R."/>
            <person name="Vorhoelter F.-J."/>
            <person name="Weidner S."/>
            <person name="Puehler A."/>
            <person name="Reinhold-Hurek B."/>
            <person name="Kaiser O."/>
            <person name="Goesmann A."/>
        </authorList>
    </citation>
    <scope>NUCLEOTIDE SEQUENCE [LARGE SCALE GENOMIC DNA]</scope>
    <source>
        <strain>BH72</strain>
    </source>
</reference>
<sequence>MLYDIARPFLFSLDAETAHEFTLAALNLAGRTLPAGKPEAADAVRVMGIDFPNRIGLAAGLDKNGEAIDGLARLGFGFIEIGTITPRPQPGNPRPRLFRLPEVRGIINRMGFNNHGVDTLVANVKAARFKGVLGINIGKNFDTPIENAADDYLACLDKVYPLASYVTVNISSPNTKNLRQLQGESELDDLLGRLKSAQQRLADQHGRYVPLTLKIAPDLEAAQITNIADALRRHRIDAVIATNTTISRDKVQGVRFAEQQGGLSGAPVFEASTAVVAQLATALGGELPIIAAGGVMDTRSARAKLEAGASLVQLYSGLIYRGPCLVRECVRATADFPR</sequence>